<sequence length="491" mass="51948">MRNQGLGSWPVRRARMSPHATAVRHGGTALTYAELSRRVARLANGLRAAGVRPGDRVAYLGPNHPAYLETLFACGQAGAVFVPLNFRLGVPELDHALADSGASVLIHTPEHAETVAALAAGRLLRVPAGELDAADDEPPDLPVGLDDVCLLMYTSGSTGRPKGAMLTHGNLTWNCVNVLVETDLASDERALVAAPLFHAAALGMVCLPTLLKGGTVILHSAFDPGAVLSAVEQERVTLVFGVPTMYQAIAAHPRWRSADLSSLRTLLCGGAPVPADLASRYLDRGLAFVQGYGMTEAAPGVLVLDRAHVAEKIGSAGVPSFFTDVRLAGPSGEPVPPGEKGEIVVSGPNVMKGYWGRPEATAEVLRDGWFHSGDVATVDGDGYFHVVDRLKDMIISGGENIYPAEVENELYGYPGVEACAVIGVPDPRWGEVGKAVVVPADGSRIDGDELLAWLRTRLAGYKVPKSVEFTDRLPTTGSGKILKGEVRRRFG</sequence>
<reference evidence="5" key="1">
    <citation type="journal article" date="2013" name="PLoS ONE">
        <title>Characterization of two streptomyces enzymes that convert ferulic Acid to vanillin.</title>
        <authorList>
            <person name="Yang W."/>
            <person name="Tang H."/>
            <person name="Ni J."/>
            <person name="Wu Q."/>
            <person name="Hua D."/>
            <person name="Tao F."/>
            <person name="Xu P."/>
        </authorList>
    </citation>
    <scope>NUCLEOTIDE SEQUENCE [GENOMIC DNA]</scope>
    <scope>FUNCTION</scope>
    <scope>CATALYTIC ACTIVITY</scope>
    <scope>SUBSTRATE SPECIFICITY</scope>
    <scope>ACTIVITY REGULATION</scope>
    <scope>BIOPHYSICOCHEMICAL PROPERTIES</scope>
    <source>
        <strain evidence="3 5">V-1 / CCTCC M 206065</strain>
    </source>
</reference>
<keyword id="KW-0067">ATP-binding</keyword>
<keyword id="KW-0436">Ligase</keyword>
<keyword id="KW-0547">Nucleotide-binding</keyword>
<gene>
    <name evidence="3 5" type="primary">fcs</name>
</gene>
<dbReference type="EC" id="6.2.1.34" evidence="2"/>
<dbReference type="EMBL" id="KC847405">
    <property type="protein sequence ID" value="AGR34008.1"/>
    <property type="status" value="ALT_SEQ"/>
    <property type="molecule type" value="Genomic_DNA"/>
</dbReference>
<dbReference type="SMR" id="S5M744"/>
<dbReference type="GO" id="GO:0106286">
    <property type="term" value="F:(E)-caffeate-CoA ligase activity"/>
    <property type="evidence" value="ECO:0000314"/>
    <property type="project" value="UniProtKB"/>
</dbReference>
<dbReference type="GO" id="GO:0016207">
    <property type="term" value="F:4-coumarate-CoA ligase activity"/>
    <property type="evidence" value="ECO:0000314"/>
    <property type="project" value="UniProtKB"/>
</dbReference>
<dbReference type="GO" id="GO:0005524">
    <property type="term" value="F:ATP binding"/>
    <property type="evidence" value="ECO:0000250"/>
    <property type="project" value="UniProtKB"/>
</dbReference>
<dbReference type="GO" id="GO:0050563">
    <property type="term" value="F:trans-feruloyl-CoA synthase activity"/>
    <property type="evidence" value="ECO:0000314"/>
    <property type="project" value="UniProtKB"/>
</dbReference>
<dbReference type="GO" id="GO:0042189">
    <property type="term" value="P:vanillin biosynthetic process"/>
    <property type="evidence" value="ECO:0000314"/>
    <property type="project" value="UniProtKB"/>
</dbReference>
<dbReference type="CDD" id="cd17631">
    <property type="entry name" value="FACL_FadD13-like"/>
    <property type="match status" value="1"/>
</dbReference>
<dbReference type="FunFam" id="3.30.300.30:FF:000008">
    <property type="entry name" value="2,3-dihydroxybenzoate-AMP ligase"/>
    <property type="match status" value="1"/>
</dbReference>
<dbReference type="Gene3D" id="3.30.300.30">
    <property type="match status" value="1"/>
</dbReference>
<dbReference type="Gene3D" id="3.40.50.12780">
    <property type="entry name" value="N-terminal domain of ligase-like"/>
    <property type="match status" value="1"/>
</dbReference>
<dbReference type="InterPro" id="IPR025110">
    <property type="entry name" value="AMP-bd_C"/>
</dbReference>
<dbReference type="InterPro" id="IPR045851">
    <property type="entry name" value="AMP-bd_C_sf"/>
</dbReference>
<dbReference type="InterPro" id="IPR020845">
    <property type="entry name" value="AMP-binding_CS"/>
</dbReference>
<dbReference type="InterPro" id="IPR000873">
    <property type="entry name" value="AMP-dep_synth/lig_dom"/>
</dbReference>
<dbReference type="InterPro" id="IPR042099">
    <property type="entry name" value="ANL_N_sf"/>
</dbReference>
<dbReference type="InterPro" id="IPR050237">
    <property type="entry name" value="ATP-dep_AMP-bd_enzyme"/>
</dbReference>
<dbReference type="PANTHER" id="PTHR43767">
    <property type="entry name" value="LONG-CHAIN-FATTY-ACID--COA LIGASE"/>
    <property type="match status" value="1"/>
</dbReference>
<dbReference type="PANTHER" id="PTHR43767:SF7">
    <property type="entry name" value="MEDIUM_LONG-CHAIN-FATTY-ACID--COA LIGASE FADD8"/>
    <property type="match status" value="1"/>
</dbReference>
<dbReference type="Pfam" id="PF00501">
    <property type="entry name" value="AMP-binding"/>
    <property type="match status" value="1"/>
</dbReference>
<dbReference type="Pfam" id="PF13193">
    <property type="entry name" value="AMP-binding_C"/>
    <property type="match status" value="1"/>
</dbReference>
<dbReference type="SUPFAM" id="SSF56801">
    <property type="entry name" value="Acetyl-CoA synthetase-like"/>
    <property type="match status" value="1"/>
</dbReference>
<dbReference type="PROSITE" id="PS00455">
    <property type="entry name" value="AMP_BINDING"/>
    <property type="match status" value="1"/>
</dbReference>
<comment type="function">
    <text evidence="2">Catalyzes the formation of (E)-feruloyl-CoA, AMP and diphosphate from (E)-ferulate, CoA and ATP. Active also with caffeate and 4-coumarate. Less active with trans-cinnamic acid. Not active with 3-methoxycinnamic acid or 4-methoxycinnamic acid. Involved in the degradation pathway of lignin-derived aromatic compounds of plant cell walls. Catalyzes the first enzymatic step in the conversion of ferulic acid into high value compound vanillin.</text>
</comment>
<comment type="catalytic activity">
    <reaction evidence="2">
        <text>(E)-ferulate + ATP + CoA = (E)-feruloyl-CoA + AMP + diphosphate</text>
        <dbReference type="Rhea" id="RHEA:36251"/>
        <dbReference type="ChEBI" id="CHEBI:29749"/>
        <dbReference type="ChEBI" id="CHEBI:30616"/>
        <dbReference type="ChEBI" id="CHEBI:33019"/>
        <dbReference type="ChEBI" id="CHEBI:57287"/>
        <dbReference type="ChEBI" id="CHEBI:87305"/>
        <dbReference type="ChEBI" id="CHEBI:456215"/>
        <dbReference type="EC" id="6.2.1.34"/>
    </reaction>
    <physiologicalReaction direction="left-to-right" evidence="2">
        <dbReference type="Rhea" id="RHEA:36252"/>
    </physiologicalReaction>
</comment>
<comment type="catalytic activity">
    <reaction evidence="2">
        <text>(E)-caffeate + ATP + CoA = (E)-caffeoyl-CoA + AMP + diphosphate</text>
        <dbReference type="Rhea" id="RHEA:36299"/>
        <dbReference type="ChEBI" id="CHEBI:30616"/>
        <dbReference type="ChEBI" id="CHEBI:33019"/>
        <dbReference type="ChEBI" id="CHEBI:57287"/>
        <dbReference type="ChEBI" id="CHEBI:57770"/>
        <dbReference type="ChEBI" id="CHEBI:87136"/>
        <dbReference type="ChEBI" id="CHEBI:456215"/>
    </reaction>
    <physiologicalReaction direction="left-to-right" evidence="2">
        <dbReference type="Rhea" id="RHEA:36300"/>
    </physiologicalReaction>
</comment>
<comment type="catalytic activity">
    <reaction evidence="2">
        <text>(E)-4-coumarate + ATP + CoA = (E)-4-coumaroyl-CoA + AMP + diphosphate</text>
        <dbReference type="Rhea" id="RHEA:19641"/>
        <dbReference type="ChEBI" id="CHEBI:12876"/>
        <dbReference type="ChEBI" id="CHEBI:30616"/>
        <dbReference type="ChEBI" id="CHEBI:33019"/>
        <dbReference type="ChEBI" id="CHEBI:57287"/>
        <dbReference type="ChEBI" id="CHEBI:85008"/>
        <dbReference type="ChEBI" id="CHEBI:456215"/>
    </reaction>
    <physiologicalReaction direction="left-to-right" evidence="2">
        <dbReference type="Rhea" id="RHEA:19642"/>
    </physiologicalReaction>
</comment>
<comment type="activity regulation">
    <text evidence="2">Activated by Mg(2+). Retains 73.3%, 61.2%, 36%, 22.6% and 4.1% of the maximal activity with Mn(2+), Co(2+), Ni(2+), Zn(2+) and MoO4(2-), respectively. Nearly loss of activity with Cu(2+), Ca(2+), Fe(2+) and WO4(2-).</text>
</comment>
<comment type="biophysicochemical properties">
    <kinetics>
        <KM evidence="2">0.35 mM for ferulate (at pH 7.0 and 30 degrees Celsius)</KM>
        <Vmax evidence="2">78.2 umol/min/mg enzyme with ferulate as substrate (at pH 7.0 and 30 degrees Celsius)</Vmax>
        <text evidence="2">kcat is 67.7 sec(-1) with ferulate as substrate.</text>
    </kinetics>
    <phDependence>
        <text evidence="2">Optimum pH is 7.0. Significant loss of activity at pH 5.0 or under and at pH 11.0 or higher.</text>
    </phDependence>
    <temperatureDependence>
        <text evidence="2">Optimum temperature is 30 degrees Celsius. Denaturates at 45 degrees Celsius. Retains about 60% of the maximal activity at 16 degrees Celsius.</text>
    </temperatureDependence>
</comment>
<comment type="similarity">
    <text evidence="4">Belongs to the ATP-dependent AMP-binding enzyme family.</text>
</comment>
<comment type="sequence caution" evidence="4">
    <conflict type="erroneous translation">
        <sequence resource="EMBL-CDS" id="AGR34008"/>
    </conflict>
    <text>Wrong genetic code use for translating the sequence start site.</text>
</comment>
<organism>
    <name type="scientific">Streptomyces sp</name>
    <dbReference type="NCBI Taxonomy" id="1931"/>
    <lineage>
        <taxon>Bacteria</taxon>
        <taxon>Bacillati</taxon>
        <taxon>Actinomycetota</taxon>
        <taxon>Actinomycetes</taxon>
        <taxon>Kitasatosporales</taxon>
        <taxon>Streptomycetaceae</taxon>
        <taxon>Streptomyces</taxon>
    </lineage>
</organism>
<proteinExistence type="evidence at protein level"/>
<feature type="chain" id="PRO_0000456580" description="Feruloyl-CoA synthase">
    <location>
        <begin position="1"/>
        <end position="491"/>
    </location>
</feature>
<feature type="binding site" evidence="1">
    <location>
        <position position="291"/>
    </location>
    <ligand>
        <name>ATP</name>
        <dbReference type="ChEBI" id="CHEBI:30616"/>
    </ligand>
</feature>
<feature type="binding site" evidence="1">
    <location>
        <position position="295"/>
    </location>
    <ligand>
        <name>ATP</name>
        <dbReference type="ChEBI" id="CHEBI:30616"/>
    </ligand>
</feature>
<feature type="binding site" evidence="1">
    <location>
        <position position="374"/>
    </location>
    <ligand>
        <name>ATP</name>
        <dbReference type="ChEBI" id="CHEBI:30616"/>
    </ligand>
</feature>
<feature type="binding site" evidence="1">
    <location>
        <position position="391"/>
    </location>
    <ligand>
        <name>ATP</name>
        <dbReference type="ChEBI" id="CHEBI:30616"/>
    </ligand>
</feature>
<accession>S5M744</accession>
<evidence type="ECO:0000250" key="1">
    <source>
        <dbReference type="UniProtKB" id="Q5SKN9"/>
    </source>
</evidence>
<evidence type="ECO:0000269" key="2">
    <source>
    </source>
</evidence>
<evidence type="ECO:0000303" key="3">
    <source>
    </source>
</evidence>
<evidence type="ECO:0000305" key="4"/>
<evidence type="ECO:0000312" key="5">
    <source>
        <dbReference type="EMBL" id="AGR34008.1"/>
    </source>
</evidence>
<name>FCS_STRSQ</name>
<protein>
    <recommendedName>
        <fullName evidence="4">Feruloyl-CoA synthase</fullName>
        <ecNumber evidence="2">6.2.1.34</ecNumber>
    </recommendedName>
    <alternativeName>
        <fullName evidence="4">Feruloyl coenzyme A synthetase</fullName>
    </alternativeName>
    <alternativeName>
        <fullName evidence="3 5">Feruloyl-CoA synthetase</fullName>
    </alternativeName>
</protein>